<gene>
    <name evidence="2" type="primary">atpB</name>
</gene>
<feature type="chain" id="PRO_0000254449" description="ATP synthase subunit beta, chloroplastic">
    <location>
        <begin position="1"/>
        <end position="498"/>
    </location>
</feature>
<feature type="binding site" evidence="2">
    <location>
        <begin position="172"/>
        <end position="179"/>
    </location>
    <ligand>
        <name>ATP</name>
        <dbReference type="ChEBI" id="CHEBI:30616"/>
    </ligand>
</feature>
<feature type="modified residue" description="Phosphothreonine" evidence="1">
    <location>
        <position position="6"/>
    </location>
</feature>
<feature type="modified residue" description="Phosphoserine" evidence="1">
    <location>
        <position position="13"/>
    </location>
</feature>
<dbReference type="EC" id="7.1.2.2" evidence="2"/>
<dbReference type="EMBL" id="AF267641">
    <property type="protein sequence ID" value="AAF78949.1"/>
    <property type="molecule type" value="Genomic_DNA"/>
</dbReference>
<dbReference type="SMR" id="Q9MS49"/>
<dbReference type="GO" id="GO:0009535">
    <property type="term" value="C:chloroplast thylakoid membrane"/>
    <property type="evidence" value="ECO:0007669"/>
    <property type="project" value="UniProtKB-SubCell"/>
</dbReference>
<dbReference type="GO" id="GO:0045259">
    <property type="term" value="C:proton-transporting ATP synthase complex"/>
    <property type="evidence" value="ECO:0007669"/>
    <property type="project" value="UniProtKB-KW"/>
</dbReference>
<dbReference type="GO" id="GO:0005524">
    <property type="term" value="F:ATP binding"/>
    <property type="evidence" value="ECO:0007669"/>
    <property type="project" value="UniProtKB-UniRule"/>
</dbReference>
<dbReference type="GO" id="GO:0016887">
    <property type="term" value="F:ATP hydrolysis activity"/>
    <property type="evidence" value="ECO:0007669"/>
    <property type="project" value="InterPro"/>
</dbReference>
<dbReference type="GO" id="GO:0046933">
    <property type="term" value="F:proton-transporting ATP synthase activity, rotational mechanism"/>
    <property type="evidence" value="ECO:0007669"/>
    <property type="project" value="UniProtKB-UniRule"/>
</dbReference>
<dbReference type="CDD" id="cd18110">
    <property type="entry name" value="ATP-synt_F1_beta_C"/>
    <property type="match status" value="1"/>
</dbReference>
<dbReference type="CDD" id="cd18115">
    <property type="entry name" value="ATP-synt_F1_beta_N"/>
    <property type="match status" value="1"/>
</dbReference>
<dbReference type="CDD" id="cd01133">
    <property type="entry name" value="F1-ATPase_beta_CD"/>
    <property type="match status" value="1"/>
</dbReference>
<dbReference type="FunFam" id="1.10.1140.10:FF:000001">
    <property type="entry name" value="ATP synthase subunit beta"/>
    <property type="match status" value="1"/>
</dbReference>
<dbReference type="FunFam" id="3.40.50.12240:FF:000006">
    <property type="entry name" value="ATP synthase subunit beta"/>
    <property type="match status" value="1"/>
</dbReference>
<dbReference type="FunFam" id="3.40.50.300:FF:000004">
    <property type="entry name" value="ATP synthase subunit beta"/>
    <property type="match status" value="1"/>
</dbReference>
<dbReference type="FunFam" id="2.40.10.170:FF:000002">
    <property type="entry name" value="ATP synthase subunit beta, chloroplastic"/>
    <property type="match status" value="1"/>
</dbReference>
<dbReference type="Gene3D" id="2.40.10.170">
    <property type="match status" value="1"/>
</dbReference>
<dbReference type="Gene3D" id="1.10.1140.10">
    <property type="entry name" value="Bovine Mitochondrial F1-atpase, Atp Synthase Beta Chain, Chain D, domain 3"/>
    <property type="match status" value="1"/>
</dbReference>
<dbReference type="Gene3D" id="3.40.50.300">
    <property type="entry name" value="P-loop containing nucleotide triphosphate hydrolases"/>
    <property type="match status" value="1"/>
</dbReference>
<dbReference type="HAMAP" id="MF_01347">
    <property type="entry name" value="ATP_synth_beta_bact"/>
    <property type="match status" value="1"/>
</dbReference>
<dbReference type="InterPro" id="IPR003593">
    <property type="entry name" value="AAA+_ATPase"/>
</dbReference>
<dbReference type="InterPro" id="IPR055190">
    <property type="entry name" value="ATP-synt_VA_C"/>
</dbReference>
<dbReference type="InterPro" id="IPR005722">
    <property type="entry name" value="ATP_synth_F1_bsu"/>
</dbReference>
<dbReference type="InterPro" id="IPR020003">
    <property type="entry name" value="ATPase_a/bsu_AS"/>
</dbReference>
<dbReference type="InterPro" id="IPR050053">
    <property type="entry name" value="ATPase_alpha/beta_chains"/>
</dbReference>
<dbReference type="InterPro" id="IPR004100">
    <property type="entry name" value="ATPase_F1/V1/A1_a/bsu_N"/>
</dbReference>
<dbReference type="InterPro" id="IPR036121">
    <property type="entry name" value="ATPase_F1/V1/A1_a/bsu_N_sf"/>
</dbReference>
<dbReference type="InterPro" id="IPR000194">
    <property type="entry name" value="ATPase_F1/V1/A1_a/bsu_nucl-bd"/>
</dbReference>
<dbReference type="InterPro" id="IPR024034">
    <property type="entry name" value="ATPase_F1/V1_b/a_C"/>
</dbReference>
<dbReference type="InterPro" id="IPR027417">
    <property type="entry name" value="P-loop_NTPase"/>
</dbReference>
<dbReference type="NCBIfam" id="TIGR01039">
    <property type="entry name" value="atpD"/>
    <property type="match status" value="1"/>
</dbReference>
<dbReference type="PANTHER" id="PTHR15184">
    <property type="entry name" value="ATP SYNTHASE"/>
    <property type="match status" value="1"/>
</dbReference>
<dbReference type="PANTHER" id="PTHR15184:SF71">
    <property type="entry name" value="ATP SYNTHASE SUBUNIT BETA, MITOCHONDRIAL"/>
    <property type="match status" value="1"/>
</dbReference>
<dbReference type="Pfam" id="PF00006">
    <property type="entry name" value="ATP-synt_ab"/>
    <property type="match status" value="1"/>
</dbReference>
<dbReference type="Pfam" id="PF02874">
    <property type="entry name" value="ATP-synt_ab_N"/>
    <property type="match status" value="1"/>
</dbReference>
<dbReference type="Pfam" id="PF22919">
    <property type="entry name" value="ATP-synt_VA_C"/>
    <property type="match status" value="1"/>
</dbReference>
<dbReference type="SMART" id="SM00382">
    <property type="entry name" value="AAA"/>
    <property type="match status" value="1"/>
</dbReference>
<dbReference type="SUPFAM" id="SSF47917">
    <property type="entry name" value="C-terminal domain of alpha and beta subunits of F1 ATP synthase"/>
    <property type="match status" value="1"/>
</dbReference>
<dbReference type="SUPFAM" id="SSF50615">
    <property type="entry name" value="N-terminal domain of alpha and beta subunits of F1 ATP synthase"/>
    <property type="match status" value="1"/>
</dbReference>
<dbReference type="SUPFAM" id="SSF52540">
    <property type="entry name" value="P-loop containing nucleoside triphosphate hydrolases"/>
    <property type="match status" value="1"/>
</dbReference>
<dbReference type="PROSITE" id="PS00152">
    <property type="entry name" value="ATPASE_ALPHA_BETA"/>
    <property type="match status" value="1"/>
</dbReference>
<organism>
    <name type="scientific">Brassica napus</name>
    <name type="common">Rape</name>
    <dbReference type="NCBI Taxonomy" id="3708"/>
    <lineage>
        <taxon>Eukaryota</taxon>
        <taxon>Viridiplantae</taxon>
        <taxon>Streptophyta</taxon>
        <taxon>Embryophyta</taxon>
        <taxon>Tracheophyta</taxon>
        <taxon>Spermatophyta</taxon>
        <taxon>Magnoliopsida</taxon>
        <taxon>eudicotyledons</taxon>
        <taxon>Gunneridae</taxon>
        <taxon>Pentapetalae</taxon>
        <taxon>rosids</taxon>
        <taxon>malvids</taxon>
        <taxon>Brassicales</taxon>
        <taxon>Brassicaceae</taxon>
        <taxon>Brassiceae</taxon>
        <taxon>Brassica</taxon>
    </lineage>
</organism>
<name>ATPB_BRANA</name>
<geneLocation type="chloroplast"/>
<evidence type="ECO:0000250" key="1">
    <source>
        <dbReference type="UniProtKB" id="P19366"/>
    </source>
</evidence>
<evidence type="ECO:0000255" key="2">
    <source>
        <dbReference type="HAMAP-Rule" id="MF_01347"/>
    </source>
</evidence>
<keyword id="KW-0066">ATP synthesis</keyword>
<keyword id="KW-0067">ATP-binding</keyword>
<keyword id="KW-0139">CF(1)</keyword>
<keyword id="KW-0150">Chloroplast</keyword>
<keyword id="KW-0375">Hydrogen ion transport</keyword>
<keyword id="KW-0406">Ion transport</keyword>
<keyword id="KW-0472">Membrane</keyword>
<keyword id="KW-0547">Nucleotide-binding</keyword>
<keyword id="KW-0597">Phosphoprotein</keyword>
<keyword id="KW-0934">Plastid</keyword>
<keyword id="KW-0793">Thylakoid</keyword>
<keyword id="KW-1278">Translocase</keyword>
<keyword id="KW-0813">Transport</keyword>
<comment type="function">
    <text evidence="2">Produces ATP from ADP in the presence of a proton gradient across the membrane. The catalytic sites are hosted primarily by the beta subunits.</text>
</comment>
<comment type="catalytic activity">
    <reaction evidence="2">
        <text>ATP + H2O + 4 H(+)(in) = ADP + phosphate + 5 H(+)(out)</text>
        <dbReference type="Rhea" id="RHEA:57720"/>
        <dbReference type="ChEBI" id="CHEBI:15377"/>
        <dbReference type="ChEBI" id="CHEBI:15378"/>
        <dbReference type="ChEBI" id="CHEBI:30616"/>
        <dbReference type="ChEBI" id="CHEBI:43474"/>
        <dbReference type="ChEBI" id="CHEBI:456216"/>
        <dbReference type="EC" id="7.1.2.2"/>
    </reaction>
</comment>
<comment type="subunit">
    <text evidence="2">F-type ATPases have 2 components, CF(1) - the catalytic core - and CF(0) - the membrane proton channel. CF(1) has five subunits: alpha(3), beta(3), gamma(1), delta(1), epsilon(1). CF(0) has four main subunits: a(1), b(1), b'(1) and c(9-12).</text>
</comment>
<comment type="subcellular location">
    <subcellularLocation>
        <location evidence="2">Plastid</location>
        <location evidence="2">Chloroplast thylakoid membrane</location>
        <topology evidence="2">Peripheral membrane protein</topology>
    </subcellularLocation>
</comment>
<comment type="similarity">
    <text evidence="2">Belongs to the ATPase alpha/beta chains family.</text>
</comment>
<reference key="1">
    <citation type="submission" date="2000-05" db="EMBL/GenBank/DDBJ databases">
        <title>Cloning and sequencing of the Brassica napus chloroplast ATP synthase beta subunit gene (atpB) and its promoter region.</title>
        <authorList>
            <person name="Zhang Z."/>
        </authorList>
    </citation>
    <scope>NUCLEOTIDE SEQUENCE [GENOMIC DNA]</scope>
    <source>
        <strain>cv. H165</strain>
    </source>
</reference>
<sequence length="498" mass="53717">MRINPTTSDPAVSIREKNNLGRIAQIIGPVLDVAFPPGKMPNIYNALVVKGRDTLGQEINVTCEVQQLLGNNRVRAVAMSATEGLKRGMDVVDMGNPLSVPVGGATLGRIFNVLGEPVNNLGPVDTLTTSPIHKSAPAFIDLDTTLSIFETGIKVVDLLAPYRRGGKIGLFGGAGVGKTVLIMELINNIAKAHGGVSVFGGVGERTREGNDLYMEMKESGVINELNLADSKVALVYGQMNEPPGARMRVGLTALTMAEYFRDVNEQDVLLFIDNIFRFVQAGSEVSALLGRMPSAVGYQPTLSAEMGSLQERITSTKKGSITSIQAVYVPADDLTDPAPATTFAHLDATTVLSRGLAAKGIYPAVDPLDSTSTMLQPRIVGEEHYETAQQVKQTLQRYKELQDIIAILGLDELSEEDRLTVARARKIERFLSQPFFVAEVFTGSPGKYVGLAETIRGFNLILSGEFDSLPEQAFYLVGNIDEATAKATNLEMESKLKK</sequence>
<protein>
    <recommendedName>
        <fullName evidence="2">ATP synthase subunit beta, chloroplastic</fullName>
        <ecNumber evidence="2">7.1.2.2</ecNumber>
    </recommendedName>
    <alternativeName>
        <fullName evidence="2">ATP synthase F1 sector subunit beta</fullName>
    </alternativeName>
    <alternativeName>
        <fullName evidence="2">F-ATPase subunit beta</fullName>
    </alternativeName>
</protein>
<accession>Q9MS49</accession>
<proteinExistence type="inferred from homology"/>